<reference evidence="4" key="1">
    <citation type="submission" date="2002-02" db="EMBL/GenBank/DDBJ databases">
        <authorList>
            <person name="Suderman R.J."/>
            <person name="Kanost M.R."/>
        </authorList>
    </citation>
    <scope>NUCLEOTIDE SEQUENCE [MRNA]</scope>
</reference>
<keyword id="KW-0193">Cuticle</keyword>
<keyword id="KW-0732">Signal</keyword>
<gene>
    <name type="primary">PCP36a</name>
</gene>
<accession>Q8T634</accession>
<sequence length="280" mass="26096">MKLFVLAAVLGVCLADRLDNKYLPPRGNAGAGFGPGFGGAGPKGGGSGFGGAGSGFGGAGSGFGGAGSGFGGGAGGGFGHGGAGSGFGGQAGGYSGAGGAGGYIGGASGQYSGRGGAASADANAQILRLNNEVTAEGFAYDFETSNGIRADAQGVATNGVQSQGSFAYKGDDGQDYSITYTADENGFVSQGAHLPTPPPIPEEILKSLEQNARDEAAGIVDDGTYRGEGAGAGGAGGYSGAGGCSGGAGGAGGFGAGGAGRAGGTATSASEAPTTTIRLM</sequence>
<evidence type="ECO:0000255" key="1"/>
<evidence type="ECO:0000255" key="2">
    <source>
        <dbReference type="PROSITE-ProRule" id="PRU00497"/>
    </source>
</evidence>
<evidence type="ECO:0000256" key="3">
    <source>
        <dbReference type="SAM" id="MobiDB-lite"/>
    </source>
</evidence>
<evidence type="ECO:0000312" key="4">
    <source>
        <dbReference type="EMBL" id="AAL90882.1"/>
    </source>
</evidence>
<protein>
    <recommendedName>
        <fullName>Pupal cuticle protein 36a</fullName>
        <shortName>CP36a</shortName>
    </recommendedName>
</protein>
<dbReference type="EMBL" id="AF487521">
    <property type="protein sequence ID" value="AAL90882.1"/>
    <property type="molecule type" value="mRNA"/>
</dbReference>
<dbReference type="OrthoDB" id="7479725at2759"/>
<dbReference type="GO" id="GO:0062129">
    <property type="term" value="C:chitin-based extracellular matrix"/>
    <property type="evidence" value="ECO:0007669"/>
    <property type="project" value="TreeGrafter"/>
</dbReference>
<dbReference type="GO" id="GO:0008010">
    <property type="term" value="F:structural constituent of chitin-based larval cuticle"/>
    <property type="evidence" value="ECO:0007669"/>
    <property type="project" value="TreeGrafter"/>
</dbReference>
<dbReference type="InterPro" id="IPR050468">
    <property type="entry name" value="Cuticle_Struct_Prot"/>
</dbReference>
<dbReference type="InterPro" id="IPR000618">
    <property type="entry name" value="Insect_cuticle"/>
</dbReference>
<dbReference type="PANTHER" id="PTHR10380">
    <property type="entry name" value="CUTICLE PROTEIN"/>
    <property type="match status" value="1"/>
</dbReference>
<dbReference type="PANTHER" id="PTHR10380:SF173">
    <property type="entry name" value="CUTICULAR PROTEIN 47EF, ISOFORM C-RELATED"/>
    <property type="match status" value="1"/>
</dbReference>
<dbReference type="Pfam" id="PF00379">
    <property type="entry name" value="Chitin_bind_4"/>
    <property type="match status" value="1"/>
</dbReference>
<dbReference type="PRINTS" id="PR00947">
    <property type="entry name" value="CUTICLE"/>
</dbReference>
<dbReference type="PROSITE" id="PS51155">
    <property type="entry name" value="CHIT_BIND_RR_2"/>
    <property type="match status" value="1"/>
</dbReference>
<feature type="signal peptide" evidence="1">
    <location>
        <begin position="1"/>
        <end position="15"/>
    </location>
</feature>
<feature type="chain" id="PRO_0000006413" description="Pupal cuticle protein 36a" evidence="1">
    <location>
        <begin position="16"/>
        <end position="280"/>
    </location>
</feature>
<feature type="domain" description="Chitin-binding type R&amp;R" evidence="2">
    <location>
        <begin position="135"/>
        <end position="198"/>
    </location>
</feature>
<feature type="region of interest" description="Disordered" evidence="3">
    <location>
        <begin position="258"/>
        <end position="280"/>
    </location>
</feature>
<name>CU36A_MANSE</name>
<proteinExistence type="evidence at transcript level"/>
<organism evidence="4">
    <name type="scientific">Manduca sexta</name>
    <name type="common">Tobacco hawkmoth</name>
    <name type="synonym">Tobacco hornworm</name>
    <dbReference type="NCBI Taxonomy" id="7130"/>
    <lineage>
        <taxon>Eukaryota</taxon>
        <taxon>Metazoa</taxon>
        <taxon>Ecdysozoa</taxon>
        <taxon>Arthropoda</taxon>
        <taxon>Hexapoda</taxon>
        <taxon>Insecta</taxon>
        <taxon>Pterygota</taxon>
        <taxon>Neoptera</taxon>
        <taxon>Endopterygota</taxon>
        <taxon>Lepidoptera</taxon>
        <taxon>Glossata</taxon>
        <taxon>Ditrysia</taxon>
        <taxon>Bombycoidea</taxon>
        <taxon>Sphingidae</taxon>
        <taxon>Sphinginae</taxon>
        <taxon>Sphingini</taxon>
        <taxon>Manduca</taxon>
    </lineage>
</organism>